<keyword id="KW-1003">Cell membrane</keyword>
<keyword id="KW-0210">Decarboxylase</keyword>
<keyword id="KW-0444">Lipid biosynthesis</keyword>
<keyword id="KW-0443">Lipid metabolism</keyword>
<keyword id="KW-0456">Lyase</keyword>
<keyword id="KW-0472">Membrane</keyword>
<keyword id="KW-0594">Phospholipid biosynthesis</keyword>
<keyword id="KW-1208">Phospholipid metabolism</keyword>
<keyword id="KW-0670">Pyruvate</keyword>
<keyword id="KW-0865">Zymogen</keyword>
<protein>
    <recommendedName>
        <fullName evidence="1">Phosphatidylserine decarboxylase proenzyme</fullName>
        <ecNumber evidence="1">4.1.1.65</ecNumber>
    </recommendedName>
    <component>
        <recommendedName>
            <fullName evidence="1">Phosphatidylserine decarboxylase alpha chain</fullName>
        </recommendedName>
    </component>
    <component>
        <recommendedName>
            <fullName evidence="1">Phosphatidylserine decarboxylase beta chain</fullName>
        </recommendedName>
    </component>
</protein>
<feature type="chain" id="PRO_1000212479" description="Phosphatidylserine decarboxylase beta chain" evidence="1">
    <location>
        <begin position="1"/>
        <end position="251"/>
    </location>
</feature>
<feature type="chain" id="PRO_1000212480" description="Phosphatidylserine decarboxylase alpha chain" evidence="1">
    <location>
        <begin position="252"/>
        <end position="286"/>
    </location>
</feature>
<feature type="active site" description="Charge relay system; for autoendoproteolytic cleavage activity" evidence="1">
    <location>
        <position position="90"/>
    </location>
</feature>
<feature type="active site" description="Charge relay system; for autoendoproteolytic cleavage activity" evidence="1">
    <location>
        <position position="147"/>
    </location>
</feature>
<feature type="active site" description="Charge relay system; for autoendoproteolytic cleavage activity" evidence="1">
    <location>
        <position position="252"/>
    </location>
</feature>
<feature type="active site" description="Schiff-base intermediate with substrate; via pyruvic acid; for decarboxylase activity" evidence="1">
    <location>
        <position position="252"/>
    </location>
</feature>
<feature type="site" description="Cleavage (non-hydrolytic); by autocatalysis" evidence="1">
    <location>
        <begin position="251"/>
        <end position="252"/>
    </location>
</feature>
<feature type="modified residue" description="Pyruvic acid (Ser); by autocatalysis" evidence="1">
    <location>
        <position position="252"/>
    </location>
</feature>
<accession>C1DLP2</accession>
<name>PSD_AZOVD</name>
<proteinExistence type="inferred from homology"/>
<sequence length="286" mass="31451">MKDRLFLLGQHLLPHHLLSRAAGRLAECRVPWVKNSLIKAFARHFQVDMGQALIEEPTAYEHFNAFFTRALKADARPLDPTPGAILSPADGAVSQLGSIEQGRVFQAKGHSFSVQELLGGDTASAASFQGGNFATVYLSPRDYHRVHMPLAGTLREMIHVPGKLYSVNRLTAENVPELFARNERLVCLFDTECGPMAVVLVGAMIVASIETVWAGVVTPPPRQIKRWRYDEATHPPVRLDKGAELGRFRLGSTVILLFGADRVRWRDGLAPLGELRMGQAIGQASV</sequence>
<evidence type="ECO:0000255" key="1">
    <source>
        <dbReference type="HAMAP-Rule" id="MF_00662"/>
    </source>
</evidence>
<comment type="function">
    <text evidence="1">Catalyzes the formation of phosphatidylethanolamine (PtdEtn) from phosphatidylserine (PtdSer).</text>
</comment>
<comment type="catalytic activity">
    <reaction evidence="1">
        <text>a 1,2-diacyl-sn-glycero-3-phospho-L-serine + H(+) = a 1,2-diacyl-sn-glycero-3-phosphoethanolamine + CO2</text>
        <dbReference type="Rhea" id="RHEA:20828"/>
        <dbReference type="ChEBI" id="CHEBI:15378"/>
        <dbReference type="ChEBI" id="CHEBI:16526"/>
        <dbReference type="ChEBI" id="CHEBI:57262"/>
        <dbReference type="ChEBI" id="CHEBI:64612"/>
        <dbReference type="EC" id="4.1.1.65"/>
    </reaction>
</comment>
<comment type="cofactor">
    <cofactor evidence="1">
        <name>pyruvate</name>
        <dbReference type="ChEBI" id="CHEBI:15361"/>
    </cofactor>
    <text evidence="1">Binds 1 pyruvoyl group covalently per subunit.</text>
</comment>
<comment type="pathway">
    <text evidence="1">Phospholipid metabolism; phosphatidylethanolamine biosynthesis; phosphatidylethanolamine from CDP-diacylglycerol: step 2/2.</text>
</comment>
<comment type="subunit">
    <text evidence="1">Heterodimer of a large membrane-associated beta subunit and a small pyruvoyl-containing alpha subunit.</text>
</comment>
<comment type="subcellular location">
    <subcellularLocation>
        <location evidence="1">Cell membrane</location>
        <topology evidence="1">Peripheral membrane protein</topology>
    </subcellularLocation>
</comment>
<comment type="PTM">
    <text evidence="1">Is synthesized initially as an inactive proenzyme. Formation of the active enzyme involves a self-maturation process in which the active site pyruvoyl group is generated from an internal serine residue via an autocatalytic post-translational modification. Two non-identical subunits are generated from the proenzyme in this reaction, and the pyruvate is formed at the N-terminus of the alpha chain, which is derived from the carboxyl end of the proenzyme. The autoendoproteolytic cleavage occurs by a canonical serine protease mechanism, in which the side chain hydroxyl group of the serine supplies its oxygen atom to form the C-terminus of the beta chain, while the remainder of the serine residue undergoes an oxidative deamination to produce ammonia and the pyruvoyl prosthetic group on the alpha chain. During this reaction, the Ser that is part of the protease active site of the proenzyme becomes the pyruvoyl prosthetic group, which constitutes an essential element of the active site of the mature decarboxylase.</text>
</comment>
<comment type="similarity">
    <text evidence="1">Belongs to the phosphatidylserine decarboxylase family. PSD-B subfamily. Prokaryotic type I sub-subfamily.</text>
</comment>
<dbReference type="EC" id="4.1.1.65" evidence="1"/>
<dbReference type="EMBL" id="CP001157">
    <property type="protein sequence ID" value="ACO76990.1"/>
    <property type="molecule type" value="Genomic_DNA"/>
</dbReference>
<dbReference type="RefSeq" id="WP_012699415.1">
    <property type="nucleotide sequence ID" value="NC_012560.1"/>
</dbReference>
<dbReference type="SMR" id="C1DLP2"/>
<dbReference type="STRING" id="322710.Avin_07440"/>
<dbReference type="EnsemblBacteria" id="ACO76990">
    <property type="protein sequence ID" value="ACO76990"/>
    <property type="gene ID" value="Avin_07440"/>
</dbReference>
<dbReference type="GeneID" id="88184140"/>
<dbReference type="KEGG" id="avn:Avin_07440"/>
<dbReference type="eggNOG" id="COG0688">
    <property type="taxonomic scope" value="Bacteria"/>
</dbReference>
<dbReference type="HOGENOM" id="CLU_029061_4_1_6"/>
<dbReference type="OrthoDB" id="9802030at2"/>
<dbReference type="UniPathway" id="UPA00558">
    <property type="reaction ID" value="UER00616"/>
</dbReference>
<dbReference type="Proteomes" id="UP000002424">
    <property type="component" value="Chromosome"/>
</dbReference>
<dbReference type="GO" id="GO:0005886">
    <property type="term" value="C:plasma membrane"/>
    <property type="evidence" value="ECO:0007669"/>
    <property type="project" value="UniProtKB-SubCell"/>
</dbReference>
<dbReference type="GO" id="GO:0004609">
    <property type="term" value="F:phosphatidylserine decarboxylase activity"/>
    <property type="evidence" value="ECO:0007669"/>
    <property type="project" value="UniProtKB-UniRule"/>
</dbReference>
<dbReference type="GO" id="GO:0006646">
    <property type="term" value="P:phosphatidylethanolamine biosynthetic process"/>
    <property type="evidence" value="ECO:0007669"/>
    <property type="project" value="UniProtKB-UniRule"/>
</dbReference>
<dbReference type="HAMAP" id="MF_00662">
    <property type="entry name" value="PS_decarb_PSD_B_type1"/>
    <property type="match status" value="1"/>
</dbReference>
<dbReference type="InterPro" id="IPR003817">
    <property type="entry name" value="PS_Dcarbxylase"/>
</dbReference>
<dbReference type="InterPro" id="IPR033177">
    <property type="entry name" value="PSD-B"/>
</dbReference>
<dbReference type="InterPro" id="IPR033178">
    <property type="entry name" value="PSD_type1_pro"/>
</dbReference>
<dbReference type="NCBIfam" id="TIGR00163">
    <property type="entry name" value="PS_decarb"/>
    <property type="match status" value="1"/>
</dbReference>
<dbReference type="PANTHER" id="PTHR10067">
    <property type="entry name" value="PHOSPHATIDYLSERINE DECARBOXYLASE"/>
    <property type="match status" value="1"/>
</dbReference>
<dbReference type="PANTHER" id="PTHR10067:SF6">
    <property type="entry name" value="PHOSPHATIDYLSERINE DECARBOXYLASE PROENZYME, MITOCHONDRIAL"/>
    <property type="match status" value="1"/>
</dbReference>
<dbReference type="Pfam" id="PF02666">
    <property type="entry name" value="PS_Dcarbxylase"/>
    <property type="match status" value="1"/>
</dbReference>
<reference key="1">
    <citation type="journal article" date="2009" name="J. Bacteriol.">
        <title>Genome sequence of Azotobacter vinelandii, an obligate aerobe specialized to support diverse anaerobic metabolic processes.</title>
        <authorList>
            <person name="Setubal J.C."/>
            <person name="Dos Santos P."/>
            <person name="Goldman B.S."/>
            <person name="Ertesvaag H."/>
            <person name="Espin G."/>
            <person name="Rubio L.M."/>
            <person name="Valla S."/>
            <person name="Almeida N.F."/>
            <person name="Balasubramanian D."/>
            <person name="Cromes L."/>
            <person name="Curatti L."/>
            <person name="Du Z."/>
            <person name="Godsy E."/>
            <person name="Goodner B."/>
            <person name="Hellner-Burris K."/>
            <person name="Hernandez J.A."/>
            <person name="Houmiel K."/>
            <person name="Imperial J."/>
            <person name="Kennedy C."/>
            <person name="Larson T.J."/>
            <person name="Latreille P."/>
            <person name="Ligon L.S."/>
            <person name="Lu J."/>
            <person name="Maerk M."/>
            <person name="Miller N.M."/>
            <person name="Norton S."/>
            <person name="O'Carroll I.P."/>
            <person name="Paulsen I."/>
            <person name="Raulfs E.C."/>
            <person name="Roemer R."/>
            <person name="Rosser J."/>
            <person name="Segura D."/>
            <person name="Slater S."/>
            <person name="Stricklin S.L."/>
            <person name="Studholme D.J."/>
            <person name="Sun J."/>
            <person name="Viana C.J."/>
            <person name="Wallin E."/>
            <person name="Wang B."/>
            <person name="Wheeler C."/>
            <person name="Zhu H."/>
            <person name="Dean D.R."/>
            <person name="Dixon R."/>
            <person name="Wood D."/>
        </authorList>
    </citation>
    <scope>NUCLEOTIDE SEQUENCE [LARGE SCALE GENOMIC DNA]</scope>
    <source>
        <strain>DJ / ATCC BAA-1303</strain>
    </source>
</reference>
<organism>
    <name type="scientific">Azotobacter vinelandii (strain DJ / ATCC BAA-1303)</name>
    <dbReference type="NCBI Taxonomy" id="322710"/>
    <lineage>
        <taxon>Bacteria</taxon>
        <taxon>Pseudomonadati</taxon>
        <taxon>Pseudomonadota</taxon>
        <taxon>Gammaproteobacteria</taxon>
        <taxon>Pseudomonadales</taxon>
        <taxon>Pseudomonadaceae</taxon>
        <taxon>Azotobacter</taxon>
    </lineage>
</organism>
<gene>
    <name evidence="1" type="primary">psd</name>
    <name type="ordered locus">Avin_07440</name>
</gene>